<accession>Q99MA2</accession>
<feature type="signal peptide" evidence="6">
    <location>
        <begin position="1"/>
        <end position="22"/>
    </location>
</feature>
<feature type="chain" id="PRO_5008179703" description="Xaa-Pro aminopeptidase 2" evidence="9">
    <location>
        <begin position="23"/>
        <end position="650"/>
    </location>
</feature>
<feature type="propeptide" id="PRO_0000438730" description="Removed in mature form" evidence="8">
    <location>
        <begin position="651"/>
        <end position="674"/>
    </location>
</feature>
<feature type="binding site" evidence="1">
    <location>
        <position position="116"/>
    </location>
    <ligand>
        <name>substrate</name>
    </ligand>
</feature>
<feature type="binding site" evidence="1">
    <location>
        <position position="430"/>
    </location>
    <ligand>
        <name>substrate</name>
    </ligand>
</feature>
<feature type="binding site" evidence="1">
    <location>
        <position position="450"/>
    </location>
    <ligand>
        <name>Zn(2+)</name>
        <dbReference type="ChEBI" id="CHEBI:29105"/>
        <label>1</label>
    </ligand>
</feature>
<feature type="binding site" evidence="1">
    <location>
        <position position="461"/>
    </location>
    <ligand>
        <name>Zn(2+)</name>
        <dbReference type="ChEBI" id="CHEBI:29105"/>
        <label>1</label>
    </ligand>
</feature>
<feature type="binding site" evidence="1">
    <location>
        <position position="461"/>
    </location>
    <ligand>
        <name>Zn(2+)</name>
        <dbReference type="ChEBI" id="CHEBI:29105"/>
        <label>2</label>
    </ligand>
</feature>
<feature type="binding site" evidence="1">
    <location>
        <position position="524"/>
    </location>
    <ligand>
        <name>substrate</name>
    </ligand>
</feature>
<feature type="binding site" evidence="1">
    <location>
        <position position="524"/>
    </location>
    <ligand>
        <name>Zn(2+)</name>
        <dbReference type="ChEBI" id="CHEBI:29105"/>
        <label>2</label>
    </ligand>
</feature>
<feature type="binding site" evidence="1">
    <location>
        <position position="533"/>
    </location>
    <ligand>
        <name>substrate</name>
    </ligand>
</feature>
<feature type="binding site" evidence="1">
    <location>
        <position position="555"/>
    </location>
    <ligand>
        <name>substrate</name>
    </ligand>
</feature>
<feature type="binding site" evidence="1">
    <location>
        <position position="555"/>
    </location>
    <ligand>
        <name>Zn(2+)</name>
        <dbReference type="ChEBI" id="CHEBI:29105"/>
        <label>2</label>
    </ligand>
</feature>
<feature type="binding site" evidence="1">
    <location>
        <position position="569"/>
    </location>
    <ligand>
        <name>Zn(2+)</name>
        <dbReference type="ChEBI" id="CHEBI:29105"/>
        <label>1</label>
    </ligand>
</feature>
<feature type="binding site" evidence="1">
    <location>
        <position position="569"/>
    </location>
    <ligand>
        <name>Zn(2+)</name>
        <dbReference type="ChEBI" id="CHEBI:29105"/>
        <label>2</label>
    </ligand>
</feature>
<feature type="lipid moiety-binding region" description="GPI-anchor amidated alanine" evidence="2">
    <location>
        <position position="650"/>
    </location>
</feature>
<feature type="glycosylation site" description="N-linked (GlcNAc...) asparagine" evidence="3">
    <location>
        <position position="65"/>
    </location>
</feature>
<feature type="glycosylation site" description="N-linked (GlcNAc...) asparagine" evidence="3">
    <location>
        <position position="278"/>
    </location>
</feature>
<feature type="glycosylation site" description="N-linked (GlcNAc...) asparagine" evidence="3">
    <location>
        <position position="293"/>
    </location>
</feature>
<reference evidence="11" key="1">
    <citation type="journal article" date="2003" name="Arch. Biochem. Biophys.">
        <title>Rat and mouse membrane aminopeptidase P: structure analysis and tissue distribution.</title>
        <authorList>
            <person name="Ersahin C."/>
            <person name="Szpaderska A.M."/>
            <person name="Simmons W.H."/>
        </authorList>
    </citation>
    <scope>NUCLEOTIDE SEQUENCE [MRNA]</scope>
    <scope>TISSUE SPECIFICITY</scope>
    <source>
        <strain evidence="11">Sprague-Dawley</strain>
    </source>
</reference>
<reference evidence="13" key="2">
    <citation type="journal article" date="2004" name="Nature">
        <title>Genome sequence of the Brown Norway rat yields insights into mammalian evolution.</title>
        <authorList>
            <person name="Gibbs R.A."/>
            <person name="Weinstock G.M."/>
            <person name="Metzker M.L."/>
            <person name="Muzny D.M."/>
            <person name="Sodergren E.J."/>
            <person name="Scherer S."/>
            <person name="Scott G."/>
            <person name="Steffen D."/>
            <person name="Worley K.C."/>
            <person name="Burch P.E."/>
            <person name="Okwuonu G."/>
            <person name="Hines S."/>
            <person name="Lewis L."/>
            <person name="Deramo C."/>
            <person name="Delgado O."/>
            <person name="Dugan-Rocha S."/>
            <person name="Miner G."/>
            <person name="Morgan M."/>
            <person name="Hawes A."/>
            <person name="Gill R."/>
            <person name="Holt R.A."/>
            <person name="Adams M.D."/>
            <person name="Amanatides P.G."/>
            <person name="Baden-Tillson H."/>
            <person name="Barnstead M."/>
            <person name="Chin S."/>
            <person name="Evans C.A."/>
            <person name="Ferriera S."/>
            <person name="Fosler C."/>
            <person name="Glodek A."/>
            <person name="Gu Z."/>
            <person name="Jennings D."/>
            <person name="Kraft C.L."/>
            <person name="Nguyen T."/>
            <person name="Pfannkoch C.M."/>
            <person name="Sitter C."/>
            <person name="Sutton G.G."/>
            <person name="Venter J.C."/>
            <person name="Woodage T."/>
            <person name="Smith D."/>
            <person name="Lee H.-M."/>
            <person name="Gustafson E."/>
            <person name="Cahill P."/>
            <person name="Kana A."/>
            <person name="Doucette-Stamm L."/>
            <person name="Weinstock K."/>
            <person name="Fechtel K."/>
            <person name="Weiss R.B."/>
            <person name="Dunn D.M."/>
            <person name="Green E.D."/>
            <person name="Blakesley R.W."/>
            <person name="Bouffard G.G."/>
            <person name="De Jong P.J."/>
            <person name="Osoegawa K."/>
            <person name="Zhu B."/>
            <person name="Marra M."/>
            <person name="Schein J."/>
            <person name="Bosdet I."/>
            <person name="Fjell C."/>
            <person name="Jones S."/>
            <person name="Krzywinski M."/>
            <person name="Mathewson C."/>
            <person name="Siddiqui A."/>
            <person name="Wye N."/>
            <person name="McPherson J."/>
            <person name="Zhao S."/>
            <person name="Fraser C.M."/>
            <person name="Shetty J."/>
            <person name="Shatsman S."/>
            <person name="Geer K."/>
            <person name="Chen Y."/>
            <person name="Abramzon S."/>
            <person name="Nierman W.C."/>
            <person name="Havlak P.H."/>
            <person name="Chen R."/>
            <person name="Durbin K.J."/>
            <person name="Egan A."/>
            <person name="Ren Y."/>
            <person name="Song X.-Z."/>
            <person name="Li B."/>
            <person name="Liu Y."/>
            <person name="Qin X."/>
            <person name="Cawley S."/>
            <person name="Cooney A.J."/>
            <person name="D'Souza L.M."/>
            <person name="Martin K."/>
            <person name="Wu J.Q."/>
            <person name="Gonzalez-Garay M.L."/>
            <person name="Jackson A.R."/>
            <person name="Kalafus K.J."/>
            <person name="McLeod M.P."/>
            <person name="Milosavljevic A."/>
            <person name="Virk D."/>
            <person name="Volkov A."/>
            <person name="Wheeler D.A."/>
            <person name="Zhang Z."/>
            <person name="Bailey J.A."/>
            <person name="Eichler E.E."/>
            <person name="Tuzun E."/>
            <person name="Birney E."/>
            <person name="Mongin E."/>
            <person name="Ureta-Vidal A."/>
            <person name="Woodwark C."/>
            <person name="Zdobnov E."/>
            <person name="Bork P."/>
            <person name="Suyama M."/>
            <person name="Torrents D."/>
            <person name="Alexandersson M."/>
            <person name="Trask B.J."/>
            <person name="Young J.M."/>
            <person name="Huang H."/>
            <person name="Wang H."/>
            <person name="Xing H."/>
            <person name="Daniels S."/>
            <person name="Gietzen D."/>
            <person name="Schmidt J."/>
            <person name="Stevens K."/>
            <person name="Vitt U."/>
            <person name="Wingrove J."/>
            <person name="Camara F."/>
            <person name="Mar Alba M."/>
            <person name="Abril J.F."/>
            <person name="Guigo R."/>
            <person name="Smit A."/>
            <person name="Dubchak I."/>
            <person name="Rubin E.M."/>
            <person name="Couronne O."/>
            <person name="Poliakov A."/>
            <person name="Huebner N."/>
            <person name="Ganten D."/>
            <person name="Goesele C."/>
            <person name="Hummel O."/>
            <person name="Kreitler T."/>
            <person name="Lee Y.-A."/>
            <person name="Monti J."/>
            <person name="Schulz H."/>
            <person name="Zimdahl H."/>
            <person name="Himmelbauer H."/>
            <person name="Lehrach H."/>
            <person name="Jacob H.J."/>
            <person name="Bromberg S."/>
            <person name="Gullings-Handley J."/>
            <person name="Jensen-Seaman M.I."/>
            <person name="Kwitek A.E."/>
            <person name="Lazar J."/>
            <person name="Pasko D."/>
            <person name="Tonellato P.J."/>
            <person name="Twigger S."/>
            <person name="Ponting C.P."/>
            <person name="Duarte J.M."/>
            <person name="Rice S."/>
            <person name="Goodstadt L."/>
            <person name="Beatson S.A."/>
            <person name="Emes R.D."/>
            <person name="Winter E.E."/>
            <person name="Webber C."/>
            <person name="Brandt P."/>
            <person name="Nyakatura G."/>
            <person name="Adetobi M."/>
            <person name="Chiaromonte F."/>
            <person name="Elnitski L."/>
            <person name="Eswara P."/>
            <person name="Hardison R.C."/>
            <person name="Hou M."/>
            <person name="Kolbe D."/>
            <person name="Makova K."/>
            <person name="Miller W."/>
            <person name="Nekrutenko A."/>
            <person name="Riemer C."/>
            <person name="Schwartz S."/>
            <person name="Taylor J."/>
            <person name="Yang S."/>
            <person name="Zhang Y."/>
            <person name="Lindpaintner K."/>
            <person name="Andrews T.D."/>
            <person name="Caccamo M."/>
            <person name="Clamp M."/>
            <person name="Clarke L."/>
            <person name="Curwen V."/>
            <person name="Durbin R.M."/>
            <person name="Eyras E."/>
            <person name="Searle S.M."/>
            <person name="Cooper G.M."/>
            <person name="Batzoglou S."/>
            <person name="Brudno M."/>
            <person name="Sidow A."/>
            <person name="Stone E.A."/>
            <person name="Payseur B.A."/>
            <person name="Bourque G."/>
            <person name="Lopez-Otin C."/>
            <person name="Puente X.S."/>
            <person name="Chakrabarti K."/>
            <person name="Chatterji S."/>
            <person name="Dewey C."/>
            <person name="Pachter L."/>
            <person name="Bray N."/>
            <person name="Yap V.B."/>
            <person name="Caspi A."/>
            <person name="Tesler G."/>
            <person name="Pevzner P.A."/>
            <person name="Haussler D."/>
            <person name="Roskin K.M."/>
            <person name="Baertsch R."/>
            <person name="Clawson H."/>
            <person name="Furey T.S."/>
            <person name="Hinrichs A.S."/>
            <person name="Karolchik D."/>
            <person name="Kent W.J."/>
            <person name="Rosenbloom K.R."/>
            <person name="Trumbower H."/>
            <person name="Weirauch M."/>
            <person name="Cooper D.N."/>
            <person name="Stenson P.D."/>
            <person name="Ma B."/>
            <person name="Brent M."/>
            <person name="Arumugam M."/>
            <person name="Shteynberg D."/>
            <person name="Copley R.R."/>
            <person name="Taylor M.S."/>
            <person name="Riethman H."/>
            <person name="Mudunuri U."/>
            <person name="Peterson J."/>
            <person name="Guyer M."/>
            <person name="Felsenfeld A."/>
            <person name="Old S."/>
            <person name="Mockrin S."/>
            <person name="Collins F.S."/>
        </authorList>
    </citation>
    <scope>NUCLEOTIDE SEQUENCE [LARGE SCALE GENOMIC DNA]</scope>
    <source>
        <strain evidence="13">Brown Norway</strain>
    </source>
</reference>
<reference evidence="12" key="3">
    <citation type="submission" date="2005-07" db="EMBL/GenBank/DDBJ databases">
        <authorList>
            <person name="Mural R.J."/>
            <person name="Adams M.D."/>
            <person name="Myers E.W."/>
            <person name="Smith H.O."/>
            <person name="Venter J.C."/>
        </authorList>
    </citation>
    <scope>NUCLEOTIDE SEQUENCE [LARGE SCALE GENOMIC DNA]</scope>
</reference>
<reference evidence="10" key="4">
    <citation type="journal article" date="2004" name="Genome Res.">
        <title>The status, quality, and expansion of the NIH full-length cDNA project: the Mammalian Gene Collection (MGC).</title>
        <authorList>
            <consortium name="The MGC Project Team"/>
        </authorList>
    </citation>
    <scope>NUCLEOTIDE SEQUENCE [LARGE SCALE MRNA]</scope>
    <source>
        <tissue evidence="10">Lung</tissue>
    </source>
</reference>
<reference evidence="8" key="5">
    <citation type="journal article" date="1995" name="Biochemistry">
        <title>Purification and properties of membrane-bound aminopeptidase P from rat lung.</title>
        <authorList>
            <person name="Orawski A.T."/>
            <person name="Simmons W.H."/>
        </authorList>
    </citation>
    <scope>PROTEIN SEQUENCE OF 23-47</scope>
    <scope>CATALYTIC ACTIVITY</scope>
    <scope>ACTIVITY REGULATION</scope>
    <scope>BIOPHYSICOCHEMICAL PROPERTIES</scope>
    <scope>SUBCELLULAR LOCATION</scope>
    <scope>GLYCOSYLATION</scope>
</reference>
<keyword id="KW-0031">Aminopeptidase</keyword>
<keyword id="KW-1003">Cell membrane</keyword>
<keyword id="KW-0903">Direct protein sequencing</keyword>
<keyword id="KW-0325">Glycoprotein</keyword>
<keyword id="KW-0336">GPI-anchor</keyword>
<keyword id="KW-0378">Hydrolase</keyword>
<keyword id="KW-0449">Lipoprotein</keyword>
<keyword id="KW-0472">Membrane</keyword>
<keyword id="KW-0479">Metal-binding</keyword>
<keyword id="KW-0645">Protease</keyword>
<keyword id="KW-1185">Reference proteome</keyword>
<keyword id="KW-0732">Signal</keyword>
<keyword id="KW-0862">Zinc</keyword>
<name>XPP2_RAT</name>
<sequence>MAQAYWQCYPWLVLLCACAWSYPGPESLGREDVRDCSTNPPRLPVTAVNTTMRLAALRQQMEKSNLSAYIIPDTDAHMSEYIGKHDERRAWISGFTGSAGTAVVTKKKAAVWTDSRYWTQAERQMDCNWELHKEVSISSIVAWILAEVPDGENVGFDPFLFSVGSWENYDQELQDSNRHLLSITTNLVDVAWGSERPPVPSQPIYALPKEFTGSTWQEKVSAIRSYMQNHTMAPTGVLLSALDETAWLFNLRSSDIPYNPFFYSYTLLTDSSIRLFVNKSRFSLETLQYLNTNCTLPMCVQLEDYSQIRDGVKAYASGNVKILIGISYTTYGVYDVIPKEKLVTETYSPVMLIKAVKNSKEQALLKASHVRDAVAVIQYLVWLEKNVPKGTVDEFSGAEHIDQLRRNENFSSGPSFETISASGLNAALAHYSPTKELHRKLSLDEMYLVDSGGQYWDGTTDITRTVHWGTPTAFQKEAYTRVLMGNIDLSRLVFPAATSGRVVEAFARRALWEVGLNYGHGTGHGIGNFLCVHEWPVGFQYNNMAMAKGMFTSIEPGYYQDGEFGIRLEDVALVVEAKTKYPGTYLTFELVSFVPYDRNLIDVSLLSPEQLQYLNRYYQTIRENIGPELQRRQLLEEFAWLERHTEPLSASAPHTTSLASMWVASALAILSWSC</sequence>
<protein>
    <recommendedName>
        <fullName evidence="8">Xaa-Pro aminopeptidase 2</fullName>
        <ecNumber evidence="6">3.4.11.9</ecNumber>
    </recommendedName>
    <alternativeName>
        <fullName evidence="7">Membrane-bound aminopeptidase P</fullName>
        <shortName evidence="7">Membrane-bound APP</shortName>
        <shortName evidence="7">mAPP</shortName>
    </alternativeName>
    <alternativeName>
        <fullName evidence="14">X-prolyl aminopeptidase 2</fullName>
    </alternativeName>
</protein>
<proteinExistence type="evidence at protein level"/>
<dbReference type="EC" id="3.4.11.9" evidence="6"/>
<dbReference type="EMBL" id="AF359355">
    <property type="protein sequence ID" value="AAK30297.1"/>
    <property type="molecule type" value="mRNA"/>
</dbReference>
<dbReference type="EMBL" id="AC127934">
    <property type="status" value="NOT_ANNOTATED_CDS"/>
    <property type="molecule type" value="Genomic_DNA"/>
</dbReference>
<dbReference type="EMBL" id="AC132991">
    <property type="status" value="NOT_ANNOTATED_CDS"/>
    <property type="molecule type" value="Genomic_DNA"/>
</dbReference>
<dbReference type="EMBL" id="CH473991">
    <property type="protein sequence ID" value="EDM10905.1"/>
    <property type="molecule type" value="Genomic_DNA"/>
</dbReference>
<dbReference type="EMBL" id="BC074017">
    <property type="protein sequence ID" value="AAH74017.1"/>
    <property type="molecule type" value="mRNA"/>
</dbReference>
<dbReference type="RefSeq" id="NP_476496.1">
    <property type="nucleotide sequence ID" value="NM_057155.4"/>
</dbReference>
<dbReference type="RefSeq" id="XP_008771735.1">
    <property type="nucleotide sequence ID" value="XM_008773513.4"/>
</dbReference>
<dbReference type="SMR" id="Q99MA2"/>
<dbReference type="FunCoup" id="Q99MA2">
    <property type="interactions" value="80"/>
</dbReference>
<dbReference type="STRING" id="10116.ENSRNOP00000005604"/>
<dbReference type="BindingDB" id="Q99MA2"/>
<dbReference type="ChEMBL" id="CHEMBL2970"/>
<dbReference type="MEROPS" id="M24.005"/>
<dbReference type="GlyCosmos" id="Q99MA2">
    <property type="glycosylation" value="3 sites, No reported glycans"/>
</dbReference>
<dbReference type="GlyGen" id="Q99MA2">
    <property type="glycosylation" value="3 sites"/>
</dbReference>
<dbReference type="PhosphoSitePlus" id="Q99MA2"/>
<dbReference type="PaxDb" id="10116-ENSRNOP00000005604"/>
<dbReference type="Ensembl" id="ENSRNOT00000098779.1">
    <property type="protein sequence ID" value="ENSRNOP00000095320.1"/>
    <property type="gene ID" value="ENSRNOG00000004009.7"/>
</dbReference>
<dbReference type="GeneID" id="117522"/>
<dbReference type="KEGG" id="rno:117522"/>
<dbReference type="UCSC" id="RGD:621277">
    <property type="organism name" value="rat"/>
</dbReference>
<dbReference type="AGR" id="RGD:621277"/>
<dbReference type="CTD" id="7512"/>
<dbReference type="RGD" id="621277">
    <property type="gene designation" value="Xpnpep2"/>
</dbReference>
<dbReference type="eggNOG" id="KOG2413">
    <property type="taxonomic scope" value="Eukaryota"/>
</dbReference>
<dbReference type="GeneTree" id="ENSGT00940000157196"/>
<dbReference type="HOGENOM" id="CLU_011781_2_2_1"/>
<dbReference type="InParanoid" id="Q99MA2"/>
<dbReference type="OMA" id="LTHFRYT"/>
<dbReference type="OrthoDB" id="25895at9989"/>
<dbReference type="PhylomeDB" id="Q99MA2"/>
<dbReference type="TreeFam" id="TF314183"/>
<dbReference type="BRENDA" id="3.4.11.9">
    <property type="organism ID" value="5301"/>
</dbReference>
<dbReference type="Reactome" id="R-RNO-163125">
    <property type="pathway name" value="Post-translational modification: synthesis of GPI-anchored proteins"/>
</dbReference>
<dbReference type="PRO" id="PR:Q99MA2"/>
<dbReference type="Proteomes" id="UP000002494">
    <property type="component" value="Chromosome X"/>
</dbReference>
<dbReference type="Proteomes" id="UP000234681">
    <property type="component" value="Chromosome x"/>
</dbReference>
<dbReference type="Bgee" id="ENSRNOG00000004009">
    <property type="expression patterns" value="Expressed in jejunum and 14 other cell types or tissues"/>
</dbReference>
<dbReference type="GO" id="GO:0070062">
    <property type="term" value="C:extracellular exosome"/>
    <property type="evidence" value="ECO:0000266"/>
    <property type="project" value="RGD"/>
</dbReference>
<dbReference type="GO" id="GO:0005886">
    <property type="term" value="C:plasma membrane"/>
    <property type="evidence" value="ECO:0007669"/>
    <property type="project" value="UniProtKB-SubCell"/>
</dbReference>
<dbReference type="GO" id="GO:0098552">
    <property type="term" value="C:side of membrane"/>
    <property type="evidence" value="ECO:0007669"/>
    <property type="project" value="UniProtKB-KW"/>
</dbReference>
<dbReference type="GO" id="GO:0046872">
    <property type="term" value="F:metal ion binding"/>
    <property type="evidence" value="ECO:0007669"/>
    <property type="project" value="UniProtKB-KW"/>
</dbReference>
<dbReference type="GO" id="GO:0070006">
    <property type="term" value="F:metalloaminopeptidase activity"/>
    <property type="evidence" value="ECO:0007669"/>
    <property type="project" value="InterPro"/>
</dbReference>
<dbReference type="GO" id="GO:0006508">
    <property type="term" value="P:proteolysis"/>
    <property type="evidence" value="ECO:0007669"/>
    <property type="project" value="UniProtKB-KW"/>
</dbReference>
<dbReference type="CDD" id="cd01085">
    <property type="entry name" value="APP"/>
    <property type="match status" value="1"/>
</dbReference>
<dbReference type="FunFam" id="3.40.350.10:FF:000008">
    <property type="entry name" value="xaa-Pro aminopeptidase 2"/>
    <property type="match status" value="1"/>
</dbReference>
<dbReference type="FunFam" id="3.90.230.10:FF:000009">
    <property type="entry name" value="xaa-Pro aminopeptidase 2"/>
    <property type="match status" value="1"/>
</dbReference>
<dbReference type="FunFam" id="3.40.350.10:FF:000003">
    <property type="entry name" value="Xaa-pro aminopeptidase P"/>
    <property type="match status" value="1"/>
</dbReference>
<dbReference type="Gene3D" id="3.90.230.10">
    <property type="entry name" value="Creatinase/methionine aminopeptidase superfamily"/>
    <property type="match status" value="1"/>
</dbReference>
<dbReference type="Gene3D" id="3.40.350.10">
    <property type="entry name" value="Creatinase/prolidase N-terminal domain"/>
    <property type="match status" value="2"/>
</dbReference>
<dbReference type="InterPro" id="IPR029149">
    <property type="entry name" value="Creatin/AminoP/Spt16_N"/>
</dbReference>
<dbReference type="InterPro" id="IPR036005">
    <property type="entry name" value="Creatinase/aminopeptidase-like"/>
</dbReference>
<dbReference type="InterPro" id="IPR000587">
    <property type="entry name" value="Creatinase_N"/>
</dbReference>
<dbReference type="InterPro" id="IPR000994">
    <property type="entry name" value="Pept_M24"/>
</dbReference>
<dbReference type="InterPro" id="IPR033740">
    <property type="entry name" value="Pept_M24B"/>
</dbReference>
<dbReference type="InterPro" id="IPR032416">
    <property type="entry name" value="Peptidase_M24_C"/>
</dbReference>
<dbReference type="InterPro" id="IPR001131">
    <property type="entry name" value="Peptidase_M24B_aminopep-P_CS"/>
</dbReference>
<dbReference type="InterPro" id="IPR050422">
    <property type="entry name" value="X-Pro_aminopeptidase_P"/>
</dbReference>
<dbReference type="PANTHER" id="PTHR43763">
    <property type="entry name" value="XAA-PRO AMINOPEPTIDASE 1"/>
    <property type="match status" value="1"/>
</dbReference>
<dbReference type="PANTHER" id="PTHR43763:SF4">
    <property type="entry name" value="XAA-PRO AMINOPEPTIDASE 2"/>
    <property type="match status" value="1"/>
</dbReference>
<dbReference type="Pfam" id="PF01321">
    <property type="entry name" value="Creatinase_N"/>
    <property type="match status" value="1"/>
</dbReference>
<dbReference type="Pfam" id="PF16189">
    <property type="entry name" value="Creatinase_N_2"/>
    <property type="match status" value="1"/>
</dbReference>
<dbReference type="Pfam" id="PF00557">
    <property type="entry name" value="Peptidase_M24"/>
    <property type="match status" value="1"/>
</dbReference>
<dbReference type="Pfam" id="PF16188">
    <property type="entry name" value="Peptidase_M24_C"/>
    <property type="match status" value="1"/>
</dbReference>
<dbReference type="SUPFAM" id="SSF55920">
    <property type="entry name" value="Creatinase/aminopeptidase"/>
    <property type="match status" value="1"/>
</dbReference>
<dbReference type="SUPFAM" id="SSF53092">
    <property type="entry name" value="Creatinase/prolidase N-terminal domain"/>
    <property type="match status" value="1"/>
</dbReference>
<dbReference type="PROSITE" id="PS00491">
    <property type="entry name" value="PROLINE_PEPTIDASE"/>
    <property type="match status" value="1"/>
</dbReference>
<organism evidence="13">
    <name type="scientific">Rattus norvegicus</name>
    <name type="common">Rat</name>
    <dbReference type="NCBI Taxonomy" id="10116"/>
    <lineage>
        <taxon>Eukaryota</taxon>
        <taxon>Metazoa</taxon>
        <taxon>Chordata</taxon>
        <taxon>Craniata</taxon>
        <taxon>Vertebrata</taxon>
        <taxon>Euteleostomi</taxon>
        <taxon>Mammalia</taxon>
        <taxon>Eutheria</taxon>
        <taxon>Euarchontoglires</taxon>
        <taxon>Glires</taxon>
        <taxon>Rodentia</taxon>
        <taxon>Myomorpha</taxon>
        <taxon>Muroidea</taxon>
        <taxon>Muridae</taxon>
        <taxon>Murinae</taxon>
        <taxon>Rattus</taxon>
    </lineage>
</organism>
<comment type="function">
    <text evidence="6">Membrane-bound metalloprotease which catalyzes the removal of a penultimate prolyl residue from the N-termini of peptides, such as Arg-Pro-Pro. May play a role in the metabolism of the vasodilator bradykinin.</text>
</comment>
<comment type="catalytic activity">
    <reaction evidence="6">
        <text>Release of any N-terminal amino acid, including proline, that is linked to proline, even from a dipeptide or tripeptide.</text>
        <dbReference type="EC" id="3.4.11.9"/>
    </reaction>
</comment>
<comment type="cofactor">
    <cofactor evidence="2">
        <name>Zn(2+)</name>
        <dbReference type="ChEBI" id="CHEBI:29105"/>
    </cofactor>
</comment>
<comment type="activity regulation">
    <text evidence="6">Inhibited by the chelating agents 1,10-phenanthroline and EDTA. Inhibited by the thiol-containing compounds 2-mercaptoethanol and dithiothreitol. Also inhibited by apstatin, captopril and p-(ch1oromercuri)benzenesulfonic acid. Weakly inhibited by D,L-2-mercaptomethyl-3-guanidinoethylthiopropanoic acid and N-[l-(R,S)-carboxy-(2-phenylethyl)]-Ala-Ala-Phe-p-aminobenzoate. Inhibited by ramiprilat and enalaprilat, in a Mn(2+)-dependent manner. Metal ions have a complex substrate- and concentration-dependent effect on activity. Activity towards Arg-Pro-Pro and Gly-Pro-Hyp is stimulated by Mn(2+) ion concentrations of 10-100 uM and then inhibited at Mn(2+) concentrations of 1-2 mM. Mn(2+) concentrations in excess of 2 mM stimulate activity towards Gly-Pro-Hyp but inhibit activity towards Arg-Pro-Pro. Zn(2+) and Co(2+) ions also inhibit activity towards Arg-Pro-Pro at high concentrations. Activity towards bradykinin is inhibited by Mn(2+) concentrations in excess of 1 mM.</text>
</comment>
<comment type="biophysicochemical properties">
    <kinetics>
        <KM evidence="6">0.35 mM for Arg-Pro-Pro (at pH 8.0)</KM>
        <KM evidence="6">0.36 mM for Arg-Pro-Pro (at pH 8.0, in the presence of 4 mM Mn(2+))</KM>
        <KM evidence="6">0.32 mM for Gly-Pro-Hyp (at pH 8.0)</KM>
        <KM evidence="6">2 mM for Gly-Pro-Hyp (at pH 8.0, in the presence of 4 mM Mn(2+))</KM>
        <KM evidence="6">0.021 mM for Arg-Pro-Pro-Gly-Phe-Ser-Pro-Phe-Arg (bradykinin, at pH 6.8)</KM>
        <KM evidence="6">0.039 mM for Arg-Pro-Pro-Gly-Phe-Ser-Pro-Phe (at pH 6.8)</KM>
        <KM evidence="6">0.051 mM for Arg-Pro-Pro-Gly-Phe-Ser-Pro (at pH 6.8)</KM>
        <KM evidence="6">0.032 mM for Arg-Pro-Pro-Gly-Phe-Ser (at pH 6.8)</KM>
        <KM evidence="6">0.048 mM for Arg-Pro-Pro-Gly-Phe (at pH 6.8)</KM>
        <KM evidence="6">0.03 mM for Arg-Pro-Pro-Gly (at pH 6.8)</KM>
        <KM evidence="6">1 mM for Arg-Pro-Pro (at pH 6.8)</KM>
    </kinetics>
    <phDependence>
        <text evidence="6">Optimum pH is 7.0 for bradykinin. Active between pH 6.0-11.0.</text>
    </phDependence>
    <temperatureDependence>
        <text evidence="6">Thermostable to 55 degrees Celsius. Complete loss of activity above 70-75 degrees Celsius.</text>
    </temperatureDependence>
</comment>
<comment type="subunit">
    <text evidence="2">Homotrimer.</text>
</comment>
<comment type="subcellular location">
    <subcellularLocation>
        <location evidence="9">Cell membrane</location>
        <topology evidence="6">Lipid-anchor</topology>
        <topology evidence="6">GPI-anchor</topology>
    </subcellularLocation>
</comment>
<comment type="tissue specificity">
    <text evidence="5">Expressed strongly in lung, liver and heart, and at lower levels in kidney, testis, brain, spleen and skeletal muscle.</text>
</comment>
<comment type="PTM">
    <text evidence="6">N-glycosylated.</text>
</comment>
<comment type="similarity">
    <text evidence="4 8">Belongs to the peptidase M24B family.</text>
</comment>
<evidence type="ECO:0000250" key="1">
    <source>
        <dbReference type="UniProtKB" id="O44750"/>
    </source>
</evidence>
<evidence type="ECO:0000250" key="2">
    <source>
        <dbReference type="UniProtKB" id="Q95333"/>
    </source>
</evidence>
<evidence type="ECO:0000255" key="3"/>
<evidence type="ECO:0000255" key="4">
    <source>
        <dbReference type="RuleBase" id="RU000590"/>
    </source>
</evidence>
<evidence type="ECO:0000269" key="5">
    <source>
    </source>
</evidence>
<evidence type="ECO:0000269" key="6">
    <source>
    </source>
</evidence>
<evidence type="ECO:0000303" key="7">
    <source>
    </source>
</evidence>
<evidence type="ECO:0000305" key="8"/>
<evidence type="ECO:0000305" key="9">
    <source>
    </source>
</evidence>
<evidence type="ECO:0000312" key="10">
    <source>
        <dbReference type="EMBL" id="AAH74017.1"/>
    </source>
</evidence>
<evidence type="ECO:0000312" key="11">
    <source>
        <dbReference type="EMBL" id="AAK30297.1"/>
    </source>
</evidence>
<evidence type="ECO:0000312" key="12">
    <source>
        <dbReference type="EMBL" id="EDM10905.1"/>
    </source>
</evidence>
<evidence type="ECO:0000312" key="13">
    <source>
        <dbReference type="Proteomes" id="UP000002494"/>
    </source>
</evidence>
<evidence type="ECO:0000312" key="14">
    <source>
        <dbReference type="RGD" id="621277"/>
    </source>
</evidence>
<gene>
    <name evidence="14" type="primary">Xpnpep2</name>
</gene>